<keyword id="KW-0002">3D-structure</keyword>
<keyword id="KW-0010">Activator</keyword>
<keyword id="KW-0186">Copper</keyword>
<keyword id="KW-0238">DNA-binding</keyword>
<keyword id="KW-0479">Metal-binding</keyword>
<keyword id="KW-0539">Nucleus</keyword>
<keyword id="KW-1185">Reference proteome</keyword>
<keyword id="KW-0804">Transcription</keyword>
<keyword id="KW-0805">Transcription regulation</keyword>
<keyword id="KW-0862">Zinc</keyword>
<feature type="chain" id="PRO_0000194927" description="Metal-activated transcriptional activator protein AMT1">
    <location>
        <begin position="1"/>
        <end position="265"/>
    </location>
</feature>
<feature type="DNA-binding region" description="Copper-fist" evidence="1">
    <location>
        <begin position="1"/>
        <end position="40"/>
    </location>
</feature>
<feature type="region of interest" description="Disordered" evidence="2">
    <location>
        <begin position="103"/>
        <end position="129"/>
    </location>
</feature>
<feature type="compositionally biased region" description="Low complexity" evidence="2">
    <location>
        <begin position="119"/>
        <end position="128"/>
    </location>
</feature>
<feature type="binding site">
    <location>
        <position position="11"/>
    </location>
    <ligand>
        <name>Zn(2+)</name>
        <dbReference type="ChEBI" id="CHEBI:29105"/>
    </ligand>
</feature>
<feature type="binding site">
    <location>
        <position position="14"/>
    </location>
    <ligand>
        <name>Zn(2+)</name>
        <dbReference type="ChEBI" id="CHEBI:29105"/>
    </ligand>
</feature>
<feature type="binding site">
    <location>
        <position position="23"/>
    </location>
    <ligand>
        <name>Zn(2+)</name>
        <dbReference type="ChEBI" id="CHEBI:29105"/>
    </ligand>
</feature>
<feature type="binding site">
    <location>
        <position position="25"/>
    </location>
    <ligand>
        <name>Zn(2+)</name>
        <dbReference type="ChEBI" id="CHEBI:29105"/>
    </ligand>
</feature>
<feature type="strand" evidence="3">
    <location>
        <begin position="2"/>
        <end position="4"/>
    </location>
</feature>
<feature type="strand" evidence="3">
    <location>
        <begin position="7"/>
        <end position="11"/>
    </location>
</feature>
<feature type="turn" evidence="3">
    <location>
        <begin position="12"/>
        <end position="17"/>
    </location>
</feature>
<feature type="helix" evidence="3">
    <location>
        <begin position="19"/>
        <end position="22"/>
    </location>
</feature>
<feature type="strand" evidence="3">
    <location>
        <begin position="30"/>
        <end position="33"/>
    </location>
</feature>
<name>AMT1_CANGA</name>
<gene>
    <name type="primary">AMT1</name>
    <name type="ordered locus">CAGL0I04180g</name>
</gene>
<reference key="1">
    <citation type="journal article" date="1991" name="Proc. Natl. Acad. Sci. U.S.A.">
        <title>Isolation of a metal-activated transcription factor gene from Candida glabrata by complementation in Saccharomyces cerevisiae.</title>
        <authorList>
            <person name="Zhou P."/>
            <person name="Thiele D.J."/>
        </authorList>
    </citation>
    <scope>NUCLEOTIDE SEQUENCE [GENOMIC DNA]</scope>
</reference>
<reference key="2">
    <citation type="journal article" date="2004" name="Nature">
        <title>Genome evolution in yeasts.</title>
        <authorList>
            <person name="Dujon B."/>
            <person name="Sherman D."/>
            <person name="Fischer G."/>
            <person name="Durrens P."/>
            <person name="Casaregola S."/>
            <person name="Lafontaine I."/>
            <person name="de Montigny J."/>
            <person name="Marck C."/>
            <person name="Neuveglise C."/>
            <person name="Talla E."/>
            <person name="Goffard N."/>
            <person name="Frangeul L."/>
            <person name="Aigle M."/>
            <person name="Anthouard V."/>
            <person name="Babour A."/>
            <person name="Barbe V."/>
            <person name="Barnay S."/>
            <person name="Blanchin S."/>
            <person name="Beckerich J.-M."/>
            <person name="Beyne E."/>
            <person name="Bleykasten C."/>
            <person name="Boisrame A."/>
            <person name="Boyer J."/>
            <person name="Cattolico L."/>
            <person name="Confanioleri F."/>
            <person name="de Daruvar A."/>
            <person name="Despons L."/>
            <person name="Fabre E."/>
            <person name="Fairhead C."/>
            <person name="Ferry-Dumazet H."/>
            <person name="Groppi A."/>
            <person name="Hantraye F."/>
            <person name="Hennequin C."/>
            <person name="Jauniaux N."/>
            <person name="Joyet P."/>
            <person name="Kachouri R."/>
            <person name="Kerrest A."/>
            <person name="Koszul R."/>
            <person name="Lemaire M."/>
            <person name="Lesur I."/>
            <person name="Ma L."/>
            <person name="Muller H."/>
            <person name="Nicaud J.-M."/>
            <person name="Nikolski M."/>
            <person name="Oztas S."/>
            <person name="Ozier-Kalogeropoulos O."/>
            <person name="Pellenz S."/>
            <person name="Potier S."/>
            <person name="Richard G.-F."/>
            <person name="Straub M.-L."/>
            <person name="Suleau A."/>
            <person name="Swennen D."/>
            <person name="Tekaia F."/>
            <person name="Wesolowski-Louvel M."/>
            <person name="Westhof E."/>
            <person name="Wirth B."/>
            <person name="Zeniou-Meyer M."/>
            <person name="Zivanovic Y."/>
            <person name="Bolotin-Fukuhara M."/>
            <person name="Thierry A."/>
            <person name="Bouchier C."/>
            <person name="Caudron B."/>
            <person name="Scarpelli C."/>
            <person name="Gaillardin C."/>
            <person name="Weissenbach J."/>
            <person name="Wincker P."/>
            <person name="Souciet J.-L."/>
        </authorList>
    </citation>
    <scope>NUCLEOTIDE SEQUENCE [LARGE SCALE GENOMIC DNA]</scope>
    <source>
        <strain>ATCC 2001 / BCRC 20586 / JCM 3761 / NBRC 0622 / NRRL Y-65 / CBS 138</strain>
    </source>
</reference>
<reference key="3">
    <citation type="journal article" date="1993" name="J. Biol. Chem.">
        <title>Regulation of metallothionein genes by the ACE1 and AMT1 transcription factors.</title>
        <authorList>
            <person name="Thorvaldsen J.L."/>
            <person name="Sewell A.K."/>
            <person name="McCowen C.L."/>
            <person name="Winge D.R."/>
        </authorList>
    </citation>
    <scope>CHARACTERIZATION</scope>
</reference>
<reference key="4">
    <citation type="journal article" date="1998" name="Nat. Struct. Biol.">
        <title>Solution structure of a zinc domain conserved in yeast copper-regulated transcription factors.</title>
        <authorList>
            <person name="Turner R.B."/>
            <person name="Smith D.L."/>
            <person name="Zawrotny M.E."/>
            <person name="Summers M.F."/>
            <person name="Posewitz M.C."/>
            <person name="Winge D.R."/>
        </authorList>
    </citation>
    <scope>STRUCTURE BY NMR OF 1-42</scope>
</reference>
<sequence>MVVINGVKYACDSCIKSHKAAQCEHNDRPLKILKPRGRPPTTCDHCKDMRKTKNVNPSGSCNCSKLEKIRQEKGITIEEDMLMSGNMDMCLCVRGEPCRCHARRKRTQKSNKKDNLSINSPTNNSPSPALSVNIGGMVVANDDILKSLGPIQNVDLTAPLDFPPNGIDNKPMESFYTQTSKSDAVDSLEFDHLMNMQMRNDNSLSFPMSANQNEVGYQFNNEGNNSMNSTMKNTITQMDQGNSHSMTLHDIDEILNNGIELGNVN</sequence>
<organism>
    <name type="scientific">Candida glabrata (strain ATCC 2001 / BCRC 20586 / JCM 3761 / NBRC 0622 / NRRL Y-65 / CBS 138)</name>
    <name type="common">Yeast</name>
    <name type="synonym">Nakaseomyces glabratus</name>
    <dbReference type="NCBI Taxonomy" id="284593"/>
    <lineage>
        <taxon>Eukaryota</taxon>
        <taxon>Fungi</taxon>
        <taxon>Dikarya</taxon>
        <taxon>Ascomycota</taxon>
        <taxon>Saccharomycotina</taxon>
        <taxon>Saccharomycetes</taxon>
        <taxon>Saccharomycetales</taxon>
        <taxon>Saccharomycetaceae</taxon>
        <taxon>Nakaseomyces</taxon>
    </lineage>
</organism>
<protein>
    <recommendedName>
        <fullName>Metal-activated transcriptional activator protein AMT1</fullName>
    </recommendedName>
</protein>
<comment type="function">
    <text>Trans-acting regulatory protein that activates transcription of the MT genes (metallothionein) in response to copper or silver ions.</text>
</comment>
<comment type="subcellular location">
    <subcellularLocation>
        <location>Nucleus</location>
    </subcellularLocation>
</comment>
<evidence type="ECO:0000255" key="1">
    <source>
        <dbReference type="PROSITE-ProRule" id="PRU00055"/>
    </source>
</evidence>
<evidence type="ECO:0000256" key="2">
    <source>
        <dbReference type="SAM" id="MobiDB-lite"/>
    </source>
</evidence>
<evidence type="ECO:0007829" key="3">
    <source>
        <dbReference type="PDB" id="1CO4"/>
    </source>
</evidence>
<dbReference type="EMBL" id="M69146">
    <property type="protein sequence ID" value="AAA35271.1"/>
    <property type="molecule type" value="Genomic_DNA"/>
</dbReference>
<dbReference type="EMBL" id="CR380955">
    <property type="protein sequence ID" value="CAG60367.1"/>
    <property type="molecule type" value="Genomic_DNA"/>
</dbReference>
<dbReference type="PIR" id="A41116">
    <property type="entry name" value="A41116"/>
</dbReference>
<dbReference type="RefSeq" id="XP_447430.1">
    <property type="nucleotide sequence ID" value="XM_447430.1"/>
</dbReference>
<dbReference type="PDB" id="1CO4">
    <property type="method" value="NMR"/>
    <property type="chains" value="A=1-42"/>
</dbReference>
<dbReference type="PDBsum" id="1CO4"/>
<dbReference type="SMR" id="P41772"/>
<dbReference type="FunCoup" id="P41772">
    <property type="interactions" value="593"/>
</dbReference>
<dbReference type="STRING" id="284593.P41772"/>
<dbReference type="EnsemblFungi" id="CAGL0I04180g-T">
    <property type="protein sequence ID" value="CAGL0I04180g-T-p1"/>
    <property type="gene ID" value="CAGL0I04180g"/>
</dbReference>
<dbReference type="GeneID" id="2889368"/>
<dbReference type="KEGG" id="cgr:2889368"/>
<dbReference type="CGD" id="CAL0132636">
    <property type="gene designation" value="AMT1"/>
</dbReference>
<dbReference type="VEuPathDB" id="FungiDB:CAGL0I04180g"/>
<dbReference type="eggNOG" id="ENOG502S7CA">
    <property type="taxonomic scope" value="Eukaryota"/>
</dbReference>
<dbReference type="HOGENOM" id="CLU_1220290_0_0_1"/>
<dbReference type="InParanoid" id="P41772"/>
<dbReference type="EvolutionaryTrace" id="P41772"/>
<dbReference type="Proteomes" id="UP000002428">
    <property type="component" value="Chromosome I"/>
</dbReference>
<dbReference type="GO" id="GO:0005634">
    <property type="term" value="C:nucleus"/>
    <property type="evidence" value="ECO:0000247"/>
    <property type="project" value="CGD"/>
</dbReference>
<dbReference type="GO" id="GO:0005507">
    <property type="term" value="F:copper ion binding"/>
    <property type="evidence" value="ECO:0000314"/>
    <property type="project" value="CGD"/>
</dbReference>
<dbReference type="GO" id="GO:0003677">
    <property type="term" value="F:DNA binding"/>
    <property type="evidence" value="ECO:0000314"/>
    <property type="project" value="CGD"/>
</dbReference>
<dbReference type="GO" id="GO:0000981">
    <property type="term" value="F:DNA-binding transcription factor activity, RNA polymerase II-specific"/>
    <property type="evidence" value="ECO:0007669"/>
    <property type="project" value="TreeGrafter"/>
</dbReference>
<dbReference type="GO" id="GO:0000978">
    <property type="term" value="F:RNA polymerase II cis-regulatory region sequence-specific DNA binding"/>
    <property type="evidence" value="ECO:0007669"/>
    <property type="project" value="TreeGrafter"/>
</dbReference>
<dbReference type="GO" id="GO:0000976">
    <property type="term" value="F:transcription cis-regulatory region binding"/>
    <property type="evidence" value="ECO:0000314"/>
    <property type="project" value="CGD"/>
</dbReference>
<dbReference type="GO" id="GO:0008270">
    <property type="term" value="F:zinc ion binding"/>
    <property type="evidence" value="ECO:0000314"/>
    <property type="project" value="UniProtKB"/>
</dbReference>
<dbReference type="GO" id="GO:0006878">
    <property type="term" value="P:intracellular copper ion homeostasis"/>
    <property type="evidence" value="ECO:0000315"/>
    <property type="project" value="CGD"/>
</dbReference>
<dbReference type="GO" id="GO:0006879">
    <property type="term" value="P:intracellular iron ion homeostasis"/>
    <property type="evidence" value="ECO:0007669"/>
    <property type="project" value="TreeGrafter"/>
</dbReference>
<dbReference type="GO" id="GO:0045944">
    <property type="term" value="P:positive regulation of transcription by RNA polymerase II"/>
    <property type="evidence" value="ECO:0007669"/>
    <property type="project" value="TreeGrafter"/>
</dbReference>
<dbReference type="GO" id="GO:0006367">
    <property type="term" value="P:transcription initiation at RNA polymerase II promoter"/>
    <property type="evidence" value="ECO:0000315"/>
    <property type="project" value="CGD"/>
</dbReference>
<dbReference type="FunFam" id="3.90.430.10:FF:000001">
    <property type="entry name" value="Copper fist DNA-binding protein"/>
    <property type="match status" value="1"/>
</dbReference>
<dbReference type="Gene3D" id="3.90.430.10">
    <property type="entry name" value="Copper fist DNA-binding domain"/>
    <property type="match status" value="1"/>
</dbReference>
<dbReference type="InterPro" id="IPR051763">
    <property type="entry name" value="Copper_Homeo_Regul"/>
</dbReference>
<dbReference type="InterPro" id="IPR001083">
    <property type="entry name" value="Cu_fist_DNA-bd_dom"/>
</dbReference>
<dbReference type="InterPro" id="IPR036395">
    <property type="entry name" value="Cu_fist_DNA-bd_dom_sf"/>
</dbReference>
<dbReference type="PANTHER" id="PTHR28088">
    <property type="entry name" value="TRANSCRIPTIONAL ACTIVATOR HAA1-RELATED"/>
    <property type="match status" value="1"/>
</dbReference>
<dbReference type="PANTHER" id="PTHR28088:SF5">
    <property type="entry name" value="TRANSCRIPTIONAL ACTIVATOR HAA1-RELATED"/>
    <property type="match status" value="1"/>
</dbReference>
<dbReference type="Pfam" id="PF00649">
    <property type="entry name" value="Copper-fist"/>
    <property type="match status" value="1"/>
</dbReference>
<dbReference type="PRINTS" id="PR00617">
    <property type="entry name" value="COPPERFIST"/>
</dbReference>
<dbReference type="SMART" id="SM01090">
    <property type="entry name" value="Copper-fist"/>
    <property type="match status" value="1"/>
</dbReference>
<dbReference type="SMART" id="SM00412">
    <property type="entry name" value="Cu_FIST"/>
    <property type="match status" value="1"/>
</dbReference>
<dbReference type="SUPFAM" id="SSF57879">
    <property type="entry name" value="Zinc domain conserved in yeast copper-regulated transcription factors"/>
    <property type="match status" value="1"/>
</dbReference>
<dbReference type="PROSITE" id="PS01119">
    <property type="entry name" value="COPPER_FIST_1"/>
    <property type="match status" value="1"/>
</dbReference>
<dbReference type="PROSITE" id="PS50073">
    <property type="entry name" value="COPPER_FIST_2"/>
    <property type="match status" value="1"/>
</dbReference>
<proteinExistence type="evidence at protein level"/>
<accession>P41772</accession>